<feature type="chain" id="PRO_1000096627" description="DNA mismatch repair protein MutL">
    <location>
        <begin position="1"/>
        <end position="563"/>
    </location>
</feature>
<dbReference type="EMBL" id="CP000117">
    <property type="protein sequence ID" value="ABA20480.1"/>
    <property type="molecule type" value="Genomic_DNA"/>
</dbReference>
<dbReference type="SMR" id="Q3MEV6"/>
<dbReference type="STRING" id="240292.Ava_0856"/>
<dbReference type="KEGG" id="ava:Ava_0856"/>
<dbReference type="eggNOG" id="COG0323">
    <property type="taxonomic scope" value="Bacteria"/>
</dbReference>
<dbReference type="HOGENOM" id="CLU_004131_4_1_3"/>
<dbReference type="Proteomes" id="UP000002533">
    <property type="component" value="Chromosome"/>
</dbReference>
<dbReference type="GO" id="GO:0032300">
    <property type="term" value="C:mismatch repair complex"/>
    <property type="evidence" value="ECO:0007669"/>
    <property type="project" value="InterPro"/>
</dbReference>
<dbReference type="GO" id="GO:0005524">
    <property type="term" value="F:ATP binding"/>
    <property type="evidence" value="ECO:0007669"/>
    <property type="project" value="InterPro"/>
</dbReference>
<dbReference type="GO" id="GO:0016887">
    <property type="term" value="F:ATP hydrolysis activity"/>
    <property type="evidence" value="ECO:0007669"/>
    <property type="project" value="InterPro"/>
</dbReference>
<dbReference type="GO" id="GO:0140664">
    <property type="term" value="F:ATP-dependent DNA damage sensor activity"/>
    <property type="evidence" value="ECO:0007669"/>
    <property type="project" value="InterPro"/>
</dbReference>
<dbReference type="GO" id="GO:0030983">
    <property type="term" value="F:mismatched DNA binding"/>
    <property type="evidence" value="ECO:0007669"/>
    <property type="project" value="InterPro"/>
</dbReference>
<dbReference type="GO" id="GO:0006298">
    <property type="term" value="P:mismatch repair"/>
    <property type="evidence" value="ECO:0007669"/>
    <property type="project" value="UniProtKB-UniRule"/>
</dbReference>
<dbReference type="CDD" id="cd16926">
    <property type="entry name" value="HATPase_MutL-MLH-PMS-like"/>
    <property type="match status" value="1"/>
</dbReference>
<dbReference type="CDD" id="cd00782">
    <property type="entry name" value="MutL_Trans"/>
    <property type="match status" value="1"/>
</dbReference>
<dbReference type="FunFam" id="3.30.565.10:FF:000003">
    <property type="entry name" value="DNA mismatch repair endonuclease MutL"/>
    <property type="match status" value="1"/>
</dbReference>
<dbReference type="Gene3D" id="3.30.230.10">
    <property type="match status" value="1"/>
</dbReference>
<dbReference type="Gene3D" id="3.30.565.10">
    <property type="entry name" value="Histidine kinase-like ATPase, C-terminal domain"/>
    <property type="match status" value="1"/>
</dbReference>
<dbReference type="Gene3D" id="3.30.1540.20">
    <property type="entry name" value="MutL, C-terminal domain, dimerisation subdomain"/>
    <property type="match status" value="1"/>
</dbReference>
<dbReference type="Gene3D" id="3.30.1370.100">
    <property type="entry name" value="MutL, C-terminal domain, regulatory subdomain"/>
    <property type="match status" value="1"/>
</dbReference>
<dbReference type="HAMAP" id="MF_00149">
    <property type="entry name" value="DNA_mis_repair"/>
    <property type="match status" value="1"/>
</dbReference>
<dbReference type="InterPro" id="IPR014762">
    <property type="entry name" value="DNA_mismatch_repair_CS"/>
</dbReference>
<dbReference type="InterPro" id="IPR020667">
    <property type="entry name" value="DNA_mismatch_repair_MutL"/>
</dbReference>
<dbReference type="InterPro" id="IPR013507">
    <property type="entry name" value="DNA_mismatch_S5_2-like"/>
</dbReference>
<dbReference type="InterPro" id="IPR036890">
    <property type="entry name" value="HATPase_C_sf"/>
</dbReference>
<dbReference type="InterPro" id="IPR002099">
    <property type="entry name" value="MutL/Mlh/PMS"/>
</dbReference>
<dbReference type="InterPro" id="IPR038973">
    <property type="entry name" value="MutL/Mlh/Pms-like"/>
</dbReference>
<dbReference type="InterPro" id="IPR014790">
    <property type="entry name" value="MutL_C"/>
</dbReference>
<dbReference type="InterPro" id="IPR042120">
    <property type="entry name" value="MutL_C_dimsub"/>
</dbReference>
<dbReference type="InterPro" id="IPR042121">
    <property type="entry name" value="MutL_C_regsub"/>
</dbReference>
<dbReference type="InterPro" id="IPR037198">
    <property type="entry name" value="MutL_C_sf"/>
</dbReference>
<dbReference type="InterPro" id="IPR020568">
    <property type="entry name" value="Ribosomal_Su5_D2-typ_SF"/>
</dbReference>
<dbReference type="InterPro" id="IPR014721">
    <property type="entry name" value="Ribsml_uS5_D2-typ_fold_subgr"/>
</dbReference>
<dbReference type="NCBIfam" id="TIGR00585">
    <property type="entry name" value="mutl"/>
    <property type="match status" value="1"/>
</dbReference>
<dbReference type="NCBIfam" id="NF000951">
    <property type="entry name" value="PRK00095.2-1"/>
    <property type="match status" value="1"/>
</dbReference>
<dbReference type="PANTHER" id="PTHR10073">
    <property type="entry name" value="DNA MISMATCH REPAIR PROTEIN MLH, PMS, MUTL"/>
    <property type="match status" value="1"/>
</dbReference>
<dbReference type="PANTHER" id="PTHR10073:SF12">
    <property type="entry name" value="DNA MISMATCH REPAIR PROTEIN MLH1"/>
    <property type="match status" value="1"/>
</dbReference>
<dbReference type="Pfam" id="PF01119">
    <property type="entry name" value="DNA_mis_repair"/>
    <property type="match status" value="1"/>
</dbReference>
<dbReference type="Pfam" id="PF13589">
    <property type="entry name" value="HATPase_c_3"/>
    <property type="match status" value="1"/>
</dbReference>
<dbReference type="Pfam" id="PF08676">
    <property type="entry name" value="MutL_C"/>
    <property type="match status" value="1"/>
</dbReference>
<dbReference type="SMART" id="SM01340">
    <property type="entry name" value="DNA_mis_repair"/>
    <property type="match status" value="1"/>
</dbReference>
<dbReference type="SMART" id="SM00853">
    <property type="entry name" value="MutL_C"/>
    <property type="match status" value="1"/>
</dbReference>
<dbReference type="SUPFAM" id="SSF55874">
    <property type="entry name" value="ATPase domain of HSP90 chaperone/DNA topoisomerase II/histidine kinase"/>
    <property type="match status" value="1"/>
</dbReference>
<dbReference type="SUPFAM" id="SSF118116">
    <property type="entry name" value="DNA mismatch repair protein MutL"/>
    <property type="match status" value="1"/>
</dbReference>
<dbReference type="SUPFAM" id="SSF54211">
    <property type="entry name" value="Ribosomal protein S5 domain 2-like"/>
    <property type="match status" value="1"/>
</dbReference>
<dbReference type="PROSITE" id="PS00058">
    <property type="entry name" value="DNA_MISMATCH_REPAIR_1"/>
    <property type="match status" value="1"/>
</dbReference>
<keyword id="KW-0227">DNA damage</keyword>
<keyword id="KW-0234">DNA repair</keyword>
<protein>
    <recommendedName>
        <fullName evidence="1">DNA mismatch repair protein MutL</fullName>
    </recommendedName>
</protein>
<comment type="function">
    <text evidence="1">This protein is involved in the repair of mismatches in DNA. It is required for dam-dependent methyl-directed DNA mismatch repair. May act as a 'molecular matchmaker', a protein that promotes the formation of a stable complex between two or more DNA-binding proteins in an ATP-dependent manner without itself being part of a final effector complex.</text>
</comment>
<comment type="similarity">
    <text evidence="1">Belongs to the DNA mismatch repair MutL/HexB family.</text>
</comment>
<accession>Q3MEV6</accession>
<organism>
    <name type="scientific">Trichormus variabilis (strain ATCC 29413 / PCC 7937)</name>
    <name type="common">Anabaena variabilis</name>
    <dbReference type="NCBI Taxonomy" id="240292"/>
    <lineage>
        <taxon>Bacteria</taxon>
        <taxon>Bacillati</taxon>
        <taxon>Cyanobacteriota</taxon>
        <taxon>Cyanophyceae</taxon>
        <taxon>Nostocales</taxon>
        <taxon>Nostocaceae</taxon>
        <taxon>Trichormus</taxon>
    </lineage>
</organism>
<reference key="1">
    <citation type="journal article" date="2014" name="Stand. Genomic Sci.">
        <title>Complete genome sequence of Anabaena variabilis ATCC 29413.</title>
        <authorList>
            <person name="Thiel T."/>
            <person name="Pratte B.S."/>
            <person name="Zhong J."/>
            <person name="Goodwin L."/>
            <person name="Copeland A."/>
            <person name="Lucas S."/>
            <person name="Han C."/>
            <person name="Pitluck S."/>
            <person name="Land M.L."/>
            <person name="Kyrpides N.C."/>
            <person name="Woyke T."/>
        </authorList>
    </citation>
    <scope>NUCLEOTIDE SEQUENCE [LARGE SCALE GENOMIC DNA]</scope>
    <source>
        <strain>ATCC 29413 / PCC 7937</strain>
    </source>
</reference>
<gene>
    <name evidence="1" type="primary">mutL</name>
    <name type="ordered locus">Ava_0856</name>
</gene>
<name>MUTL_TRIV2</name>
<sequence>MASTIQALPQEVVYLITAGEVIDSFAAVVRELVENSLDAGANRIVVYLWPQQWRVRVADNGCGMNLDDLQQAASAHSTSKIRSSADLWKIHSLGFRGEALHSLTTLADVEIISRAPENVGWRVVYGDNGEATQVEATAIAPGTVVTVSNLFASCAARRQGLPTTAQQMKAVQATIQQIALCHPQTTWQVWQNDRIWFTISPAATAGQLIPQFLPQLRPGDLQEIKLEIPNPENPQLSTNNKANATTLSLVVGLPDRCHRHRPDWVRVAINGRMIKSPELEQTILAAFHRTLPRDRYPLCFLHLLISPDQINWNRNPAKTEIYLHDLSYWQEQVTQAINQTLRISAANIKESVQTTRVSQLLKAAEEKGNYNFNPQNANPADNTQHYLKAVAQVSNTYIVAEHSGGMWLVEQHIAHERVLYEQLCDNWRLIPVEPPIILYQLSPAQVAQLQRIGLDIDIFGEQLWAVRNLPAMLQQREDCAEAILELSWGGDLQTAQVAVACRSAIRNGTPMSLPEMQKLLDDWQRTRNPRTCPHGRPIYLSLDESSLSRFFRRHWVIGKSHGI</sequence>
<evidence type="ECO:0000255" key="1">
    <source>
        <dbReference type="HAMAP-Rule" id="MF_00149"/>
    </source>
</evidence>
<proteinExistence type="inferred from homology"/>